<dbReference type="EC" id="3.2.-.-" evidence="1"/>
<dbReference type="EMBL" id="CP001138">
    <property type="protein sequence ID" value="ACH51736.1"/>
    <property type="molecule type" value="Genomic_DNA"/>
</dbReference>
<dbReference type="RefSeq" id="WP_000127273.1">
    <property type="nucleotide sequence ID" value="NC_011149.1"/>
</dbReference>
<dbReference type="SMR" id="B5F731"/>
<dbReference type="KEGG" id="sea:SeAg_B0058"/>
<dbReference type="HOGENOM" id="CLU_036838_2_2_6"/>
<dbReference type="Proteomes" id="UP000008819">
    <property type="component" value="Chromosome"/>
</dbReference>
<dbReference type="GO" id="GO:0005829">
    <property type="term" value="C:cytosol"/>
    <property type="evidence" value="ECO:0007669"/>
    <property type="project" value="TreeGrafter"/>
</dbReference>
<dbReference type="GO" id="GO:0008477">
    <property type="term" value="F:purine nucleosidase activity"/>
    <property type="evidence" value="ECO:0007669"/>
    <property type="project" value="TreeGrafter"/>
</dbReference>
<dbReference type="GO" id="GO:0006144">
    <property type="term" value="P:purine nucleobase metabolic process"/>
    <property type="evidence" value="ECO:0007669"/>
    <property type="project" value="UniProtKB-UniRule"/>
</dbReference>
<dbReference type="GO" id="GO:0006152">
    <property type="term" value="P:purine nucleoside catabolic process"/>
    <property type="evidence" value="ECO:0007669"/>
    <property type="project" value="TreeGrafter"/>
</dbReference>
<dbReference type="GO" id="GO:0006206">
    <property type="term" value="P:pyrimidine nucleobase metabolic process"/>
    <property type="evidence" value="ECO:0007669"/>
    <property type="project" value="UniProtKB-UniRule"/>
</dbReference>
<dbReference type="CDD" id="cd02651">
    <property type="entry name" value="nuc_hydro_IU_UC_XIUA"/>
    <property type="match status" value="1"/>
</dbReference>
<dbReference type="FunFam" id="3.90.245.10:FF:000002">
    <property type="entry name" value="Non-specific ribonucleoside hydrolase RihC"/>
    <property type="match status" value="1"/>
</dbReference>
<dbReference type="Gene3D" id="3.90.245.10">
    <property type="entry name" value="Ribonucleoside hydrolase-like"/>
    <property type="match status" value="1"/>
</dbReference>
<dbReference type="HAMAP" id="MF_01432">
    <property type="entry name" value="Nucleosid_hydro_RihC"/>
    <property type="match status" value="1"/>
</dbReference>
<dbReference type="InterPro" id="IPR001910">
    <property type="entry name" value="Inosine/uridine_hydrolase_dom"/>
</dbReference>
<dbReference type="InterPro" id="IPR023186">
    <property type="entry name" value="IUNH"/>
</dbReference>
<dbReference type="InterPro" id="IPR022976">
    <property type="entry name" value="Nucleosid_hydro_RihC_nonspecif"/>
</dbReference>
<dbReference type="InterPro" id="IPR036452">
    <property type="entry name" value="Ribo_hydro-like"/>
</dbReference>
<dbReference type="NCBIfam" id="NF008036">
    <property type="entry name" value="PRK10768.1"/>
    <property type="match status" value="1"/>
</dbReference>
<dbReference type="PANTHER" id="PTHR12304">
    <property type="entry name" value="INOSINE-URIDINE PREFERRING NUCLEOSIDE HYDROLASE"/>
    <property type="match status" value="1"/>
</dbReference>
<dbReference type="PANTHER" id="PTHR12304:SF15">
    <property type="entry name" value="NON-SPECIFIC RIBONUCLEOSIDE HYDROLASE RIHC"/>
    <property type="match status" value="1"/>
</dbReference>
<dbReference type="Pfam" id="PF01156">
    <property type="entry name" value="IU_nuc_hydro"/>
    <property type="match status" value="1"/>
</dbReference>
<dbReference type="SUPFAM" id="SSF53590">
    <property type="entry name" value="Nucleoside hydrolase"/>
    <property type="match status" value="1"/>
</dbReference>
<name>RIHC_SALA4</name>
<protein>
    <recommendedName>
        <fullName evidence="1">Non-specific ribonucleoside hydrolase RihC</fullName>
        <ecNumber evidence="1">3.2.-.-</ecNumber>
    </recommendedName>
    <alternativeName>
        <fullName evidence="1">Purine/pyrimidine ribonucleoside hydrolase</fullName>
    </alternativeName>
</protein>
<evidence type="ECO:0000255" key="1">
    <source>
        <dbReference type="HAMAP-Rule" id="MF_01432"/>
    </source>
</evidence>
<sequence length="306" mass="33031">MTASLHIILDTDPGIDDAAAIAAALFAPELDLQLITTVAGNVSVEKTTRNALQLLHFWDADVPLAQGAATPLLRPLRDAAYVHGESGMEGYDFVDHQRQPLAKPAFIAIRDVLMNAPEPMTLVAIGPLTNIALLLMHYPECACNIRRLVLMGGSAGRGNFTPNAEFNIAVDPEAAAHVFRSGIEIVMCGLDVTNQAMLSPDFLSKLPALNRTGKMLHSLFNHYRSGSMRTGVRMHDLCAIAWLVRPELFTLQSCFVAVETQGQYTAGTTVVDIEGRLGQPANAQVALALDVDGFRQWVAEVFACAP</sequence>
<reference key="1">
    <citation type="journal article" date="2011" name="J. Bacteriol.">
        <title>Comparative genomics of 28 Salmonella enterica isolates: evidence for CRISPR-mediated adaptive sublineage evolution.</title>
        <authorList>
            <person name="Fricke W.F."/>
            <person name="Mammel M.K."/>
            <person name="McDermott P.F."/>
            <person name="Tartera C."/>
            <person name="White D.G."/>
            <person name="Leclerc J.E."/>
            <person name="Ravel J."/>
            <person name="Cebula T.A."/>
        </authorList>
    </citation>
    <scope>NUCLEOTIDE SEQUENCE [LARGE SCALE GENOMIC DNA]</scope>
    <source>
        <strain>SL483</strain>
    </source>
</reference>
<organism>
    <name type="scientific">Salmonella agona (strain SL483)</name>
    <dbReference type="NCBI Taxonomy" id="454166"/>
    <lineage>
        <taxon>Bacteria</taxon>
        <taxon>Pseudomonadati</taxon>
        <taxon>Pseudomonadota</taxon>
        <taxon>Gammaproteobacteria</taxon>
        <taxon>Enterobacterales</taxon>
        <taxon>Enterobacteriaceae</taxon>
        <taxon>Salmonella</taxon>
    </lineage>
</organism>
<keyword id="KW-0326">Glycosidase</keyword>
<keyword id="KW-0378">Hydrolase</keyword>
<comment type="function">
    <text evidence="1">Hydrolyzes both purine and pyrimidine ribonucleosides with a broad-substrate specificity.</text>
</comment>
<comment type="similarity">
    <text evidence="1">Belongs to the IUNH family. RihC subfamily.</text>
</comment>
<gene>
    <name evidence="1" type="primary">rihC</name>
    <name type="ordered locus">SeAg_B0058</name>
</gene>
<proteinExistence type="inferred from homology"/>
<accession>B5F731</accession>
<feature type="chain" id="PRO_1000145818" description="Non-specific ribonucleoside hydrolase RihC">
    <location>
        <begin position="1"/>
        <end position="306"/>
    </location>
</feature>
<feature type="active site" evidence="1">
    <location>
        <position position="235"/>
    </location>
</feature>